<name>CAP9_ADET1</name>
<accession>P04376</accession>
<organismHost>
    <name type="scientific">Tupaiidae</name>
    <name type="common">tree shrews</name>
    <dbReference type="NCBI Taxonomy" id="9393"/>
</organismHost>
<feature type="chain" id="PRO_0000221854" description="Hexon-interlacing protein" evidence="1">
    <location>
        <begin position="1"/>
        <end position="122"/>
    </location>
</feature>
<feature type="coiled-coil region" evidence="1">
    <location>
        <begin position="72"/>
        <end position="106"/>
    </location>
</feature>
<gene>
    <name evidence="1" type="primary">IX</name>
</gene>
<keyword id="KW-1232">Capsid decoration protein</keyword>
<keyword id="KW-0167">Capsid protein</keyword>
<keyword id="KW-0175">Coiled coil</keyword>
<keyword id="KW-1048">Host nucleus</keyword>
<keyword id="KW-0945">Host-virus interaction</keyword>
<keyword id="KW-0946">Virion</keyword>
<keyword id="KW-1160">Virus entry into host cell</keyword>
<evidence type="ECO:0000255" key="1">
    <source>
        <dbReference type="HAMAP-Rule" id="MF_04050"/>
    </source>
</evidence>
<proteinExistence type="inferred from homology"/>
<dbReference type="EMBL" id="M10054">
    <property type="protein sequence ID" value="AAA42532.1"/>
    <property type="molecule type" value="Genomic_DNA"/>
</dbReference>
<dbReference type="PIR" id="A03856">
    <property type="entry name" value="SXAD9T"/>
</dbReference>
<dbReference type="SMR" id="P04376"/>
<dbReference type="GO" id="GO:0042025">
    <property type="term" value="C:host cell nucleus"/>
    <property type="evidence" value="ECO:0007669"/>
    <property type="project" value="UniProtKB-SubCell"/>
</dbReference>
<dbReference type="GO" id="GO:0098021">
    <property type="term" value="C:viral capsid, decoration"/>
    <property type="evidence" value="ECO:0007669"/>
    <property type="project" value="UniProtKB-UniRule"/>
</dbReference>
<dbReference type="GO" id="GO:0031423">
    <property type="term" value="F:hexon binding"/>
    <property type="evidence" value="ECO:0007669"/>
    <property type="project" value="InterPro"/>
</dbReference>
<dbReference type="GO" id="GO:0046718">
    <property type="term" value="P:symbiont entry into host cell"/>
    <property type="evidence" value="ECO:0007669"/>
    <property type="project" value="UniProtKB-UniRule"/>
</dbReference>
<dbReference type="HAMAP" id="MF_04050">
    <property type="entry name" value="ADV_CAP9"/>
    <property type="match status" value="1"/>
</dbReference>
<dbReference type="InterPro" id="IPR005641">
    <property type="entry name" value="Hexon_assoc_IX"/>
</dbReference>
<dbReference type="Pfam" id="PF03955">
    <property type="entry name" value="Adeno_PIX"/>
    <property type="match status" value="1"/>
</dbReference>
<protein>
    <recommendedName>
        <fullName evidence="1">Hexon-interlacing protein</fullName>
    </recommendedName>
    <alternativeName>
        <fullName evidence="1">Protein IX</fullName>
    </alternativeName>
</protein>
<reference key="1">
    <citation type="journal article" date="1985" name="Gene">
        <title>The nucleotide sequence of the early region of the Tupaia adenovirus DNA corresponding to the oncogenic region E1b of human adenovirus 7.</title>
        <authorList>
            <person name="Flugel R.M."/>
            <person name="Bannert H."/>
            <person name="Suhai S."/>
            <person name="Darai G."/>
        </authorList>
    </citation>
    <scope>NUCLEOTIDE SEQUENCE [GENOMIC DNA]</scope>
</reference>
<comment type="function">
    <text evidence="1">Structural component of the virion that acts as a cement protein on the capsid exterior and forms triskelion structures consisting of three molecules that stabilize three hexon trimers at the center of each icosahedral facet and fixes the peripentonal hexons. Dispensable for assembly. During virus entry, recruits the anterograde motor kinesin-1 to the capsid docked at the nuclear pore complex thereby subjecting the docked capsid to a pulling force. The resulting tension leads to capsid disruption, dispersion of capsid fragments toward cell periphery and eventually viral DNA entry into the host nucleus.</text>
</comment>
<comment type="subunit">
    <text evidence="1">Homotrimer. Interacts with hexon protein; this interaction tethers the hexons together. Self-interacts with adjacent proteins. Interacts with kinesin light chain KLC1; this interaction leads to capsid disruption at the nuclear pore complex during virus entry into host cell.</text>
</comment>
<comment type="subcellular location">
    <subcellularLocation>
        <location evidence="1">Virion</location>
    </subcellularLocation>
    <subcellularLocation>
        <location evidence="1">Host nucleus</location>
    </subcellularLocation>
    <text evidence="1">Located in the canyons between the hexons on the outer surface of the capsid. Forms a sort of hairnet on the outer side of the virion. Present in 240 copies per virion.</text>
</comment>
<comment type="induction">
    <text evidence="1">Expressed in the intermediate phase of the viral replicative cycle.</text>
</comment>
<comment type="domain">
    <text evidence="1">Three N-terminal domains of hexon-interlacing protein form triskelions between hexon capsomers.</text>
</comment>
<comment type="miscellaneous">
    <text evidence="1">This protein is only encoded by mastadenoviruses, and may therefore play a role in mammals tropism.</text>
</comment>
<comment type="similarity">
    <text evidence="1">Belongs to the adenoviridae hexon-interlacing protein family.</text>
</comment>
<organism>
    <name type="scientific">Tree shrew adenovirus serotype 1</name>
    <name type="common">TSAdV-1</name>
    <name type="synonym">Tupaia adenovirus 1</name>
    <dbReference type="NCBI Taxonomy" id="47680"/>
    <lineage>
        <taxon>Viruses</taxon>
        <taxon>Varidnaviria</taxon>
        <taxon>Bamfordvirae</taxon>
        <taxon>Preplasmiviricota</taxon>
        <taxon>Tectiliviricetes</taxon>
        <taxon>Rowavirales</taxon>
        <taxon>Adenoviridae</taxon>
        <taxon>Mastadenovirus</taxon>
        <taxon>Tree shrew mastadenovirus A</taxon>
    </lineage>
</organism>
<sequence>MSSNDNSGIVNTCFLTTRLPAWAGVRQDEVGSDVNGLPIIPSNSMQIRSRAATTDAATEPSTRQGLNLLRSVTELNESIDELQQKMTELEKRLKIMEEKIEEIKLALANPLIENPHDGNFIV</sequence>